<dbReference type="EMBL" id="D84432">
    <property type="protein sequence ID" value="BAA12508.1"/>
    <property type="molecule type" value="Genomic_DNA"/>
</dbReference>
<dbReference type="EMBL" id="AL009126">
    <property type="protein sequence ID" value="CAB14431.2"/>
    <property type="molecule type" value="Genomic_DNA"/>
</dbReference>
<dbReference type="PIR" id="H69955">
    <property type="entry name" value="H69955"/>
</dbReference>
<dbReference type="RefSeq" id="NP_390380.2">
    <property type="nucleotide sequence ID" value="NC_000964.3"/>
</dbReference>
<dbReference type="RefSeq" id="WP_003230095.1">
    <property type="nucleotide sequence ID" value="NZ_OZ025638.1"/>
</dbReference>
<dbReference type="SMR" id="P54487"/>
<dbReference type="FunCoup" id="P54487">
    <property type="interactions" value="27"/>
</dbReference>
<dbReference type="STRING" id="224308.BSU25010"/>
<dbReference type="TCDB" id="2.A.1.33.1">
    <property type="family name" value="the major facilitator superfamily (mfs)"/>
</dbReference>
<dbReference type="PaxDb" id="224308-BSU25010"/>
<dbReference type="EnsemblBacteria" id="CAB14431">
    <property type="protein sequence ID" value="CAB14431"/>
    <property type="gene ID" value="BSU_25010"/>
</dbReference>
<dbReference type="GeneID" id="938196"/>
<dbReference type="KEGG" id="bsu:BSU25010"/>
<dbReference type="PATRIC" id="fig|224308.179.peg.2720"/>
<dbReference type="eggNOG" id="COG0477">
    <property type="taxonomic scope" value="Bacteria"/>
</dbReference>
<dbReference type="InParanoid" id="P54487"/>
<dbReference type="OrthoDB" id="2086294at2"/>
<dbReference type="BioCyc" id="BSUB:BSU25010-MONOMER"/>
<dbReference type="Proteomes" id="UP000001570">
    <property type="component" value="Chromosome"/>
</dbReference>
<dbReference type="GO" id="GO:0005886">
    <property type="term" value="C:plasma membrane"/>
    <property type="evidence" value="ECO:0007669"/>
    <property type="project" value="UniProtKB-SubCell"/>
</dbReference>
<dbReference type="GO" id="GO:0022857">
    <property type="term" value="F:transmembrane transporter activity"/>
    <property type="evidence" value="ECO:0007669"/>
    <property type="project" value="InterPro"/>
</dbReference>
<dbReference type="Gene3D" id="1.20.1250.20">
    <property type="entry name" value="MFS general substrate transporter like domains"/>
    <property type="match status" value="2"/>
</dbReference>
<dbReference type="InterPro" id="IPR011701">
    <property type="entry name" value="MFS"/>
</dbReference>
<dbReference type="InterPro" id="IPR036259">
    <property type="entry name" value="MFS_trans_sf"/>
</dbReference>
<dbReference type="InterPro" id="IPR052528">
    <property type="entry name" value="Sugar_transport-like"/>
</dbReference>
<dbReference type="PANTHER" id="PTHR23526">
    <property type="entry name" value="INTEGRAL MEMBRANE TRANSPORT PROTEIN-RELATED"/>
    <property type="match status" value="1"/>
</dbReference>
<dbReference type="PANTHER" id="PTHR23526:SF2">
    <property type="entry name" value="MAJOR FACILITATOR SUPERFAMILY (MFS) PROFILE DOMAIN-CONTAINING PROTEIN"/>
    <property type="match status" value="1"/>
</dbReference>
<dbReference type="Pfam" id="PF07690">
    <property type="entry name" value="MFS_1"/>
    <property type="match status" value="1"/>
</dbReference>
<dbReference type="SUPFAM" id="SSF103473">
    <property type="entry name" value="MFS general substrate transporter"/>
    <property type="match status" value="1"/>
</dbReference>
<comment type="subcellular location">
    <subcellularLocation>
        <location evidence="3">Cell membrane</location>
        <topology evidence="3">Multi-pass membrane protein</topology>
    </subcellularLocation>
</comment>
<reference key="1">
    <citation type="journal article" date="1996" name="Microbiology">
        <title>Systematic sequencing of the 283 kb 210 degrees-232 degrees region of the Bacillus subtilis genome containing the skin element and many sporulation genes.</title>
        <authorList>
            <person name="Mizuno M."/>
            <person name="Masuda S."/>
            <person name="Takemaru K."/>
            <person name="Hosono S."/>
            <person name="Sato T."/>
            <person name="Takeuchi M."/>
            <person name="Kobayashi Y."/>
        </authorList>
    </citation>
    <scope>NUCLEOTIDE SEQUENCE [GENOMIC DNA]</scope>
    <source>
        <strain>168 / JH642</strain>
    </source>
</reference>
<reference key="2">
    <citation type="journal article" date="1997" name="Nature">
        <title>The complete genome sequence of the Gram-positive bacterium Bacillus subtilis.</title>
        <authorList>
            <person name="Kunst F."/>
            <person name="Ogasawara N."/>
            <person name="Moszer I."/>
            <person name="Albertini A.M."/>
            <person name="Alloni G."/>
            <person name="Azevedo V."/>
            <person name="Bertero M.G."/>
            <person name="Bessieres P."/>
            <person name="Bolotin A."/>
            <person name="Borchert S."/>
            <person name="Borriss R."/>
            <person name="Boursier L."/>
            <person name="Brans A."/>
            <person name="Braun M."/>
            <person name="Brignell S.C."/>
            <person name="Bron S."/>
            <person name="Brouillet S."/>
            <person name="Bruschi C.V."/>
            <person name="Caldwell B."/>
            <person name="Capuano V."/>
            <person name="Carter N.M."/>
            <person name="Choi S.-K."/>
            <person name="Codani J.-J."/>
            <person name="Connerton I.F."/>
            <person name="Cummings N.J."/>
            <person name="Daniel R.A."/>
            <person name="Denizot F."/>
            <person name="Devine K.M."/>
            <person name="Duesterhoeft A."/>
            <person name="Ehrlich S.D."/>
            <person name="Emmerson P.T."/>
            <person name="Entian K.-D."/>
            <person name="Errington J."/>
            <person name="Fabret C."/>
            <person name="Ferrari E."/>
            <person name="Foulger D."/>
            <person name="Fritz C."/>
            <person name="Fujita M."/>
            <person name="Fujita Y."/>
            <person name="Fuma S."/>
            <person name="Galizzi A."/>
            <person name="Galleron N."/>
            <person name="Ghim S.-Y."/>
            <person name="Glaser P."/>
            <person name="Goffeau A."/>
            <person name="Golightly E.J."/>
            <person name="Grandi G."/>
            <person name="Guiseppi G."/>
            <person name="Guy B.J."/>
            <person name="Haga K."/>
            <person name="Haiech J."/>
            <person name="Harwood C.R."/>
            <person name="Henaut A."/>
            <person name="Hilbert H."/>
            <person name="Holsappel S."/>
            <person name="Hosono S."/>
            <person name="Hullo M.-F."/>
            <person name="Itaya M."/>
            <person name="Jones L.-M."/>
            <person name="Joris B."/>
            <person name="Karamata D."/>
            <person name="Kasahara Y."/>
            <person name="Klaerr-Blanchard M."/>
            <person name="Klein C."/>
            <person name="Kobayashi Y."/>
            <person name="Koetter P."/>
            <person name="Koningstein G."/>
            <person name="Krogh S."/>
            <person name="Kumano M."/>
            <person name="Kurita K."/>
            <person name="Lapidus A."/>
            <person name="Lardinois S."/>
            <person name="Lauber J."/>
            <person name="Lazarevic V."/>
            <person name="Lee S.-M."/>
            <person name="Levine A."/>
            <person name="Liu H."/>
            <person name="Masuda S."/>
            <person name="Mauel C."/>
            <person name="Medigue C."/>
            <person name="Medina N."/>
            <person name="Mellado R.P."/>
            <person name="Mizuno M."/>
            <person name="Moestl D."/>
            <person name="Nakai S."/>
            <person name="Noback M."/>
            <person name="Noone D."/>
            <person name="O'Reilly M."/>
            <person name="Ogawa K."/>
            <person name="Ogiwara A."/>
            <person name="Oudega B."/>
            <person name="Park S.-H."/>
            <person name="Parro V."/>
            <person name="Pohl T.M."/>
            <person name="Portetelle D."/>
            <person name="Porwollik S."/>
            <person name="Prescott A.M."/>
            <person name="Presecan E."/>
            <person name="Pujic P."/>
            <person name="Purnelle B."/>
            <person name="Rapoport G."/>
            <person name="Rey M."/>
            <person name="Reynolds S."/>
            <person name="Rieger M."/>
            <person name="Rivolta C."/>
            <person name="Rocha E."/>
            <person name="Roche B."/>
            <person name="Rose M."/>
            <person name="Sadaie Y."/>
            <person name="Sato T."/>
            <person name="Scanlan E."/>
            <person name="Schleich S."/>
            <person name="Schroeter R."/>
            <person name="Scoffone F."/>
            <person name="Sekiguchi J."/>
            <person name="Sekowska A."/>
            <person name="Seror S.J."/>
            <person name="Serror P."/>
            <person name="Shin B.-S."/>
            <person name="Soldo B."/>
            <person name="Sorokin A."/>
            <person name="Tacconi E."/>
            <person name="Takagi T."/>
            <person name="Takahashi H."/>
            <person name="Takemaru K."/>
            <person name="Takeuchi M."/>
            <person name="Tamakoshi A."/>
            <person name="Tanaka T."/>
            <person name="Terpstra P."/>
            <person name="Tognoni A."/>
            <person name="Tosato V."/>
            <person name="Uchiyama S."/>
            <person name="Vandenbol M."/>
            <person name="Vannier F."/>
            <person name="Vassarotti A."/>
            <person name="Viari A."/>
            <person name="Wambutt R."/>
            <person name="Wedler E."/>
            <person name="Wedler H."/>
            <person name="Weitzenegger T."/>
            <person name="Winters P."/>
            <person name="Wipat A."/>
            <person name="Yamamoto H."/>
            <person name="Yamane K."/>
            <person name="Yasumoto K."/>
            <person name="Yata K."/>
            <person name="Yoshida K."/>
            <person name="Yoshikawa H.-F."/>
            <person name="Zumstein E."/>
            <person name="Yoshikawa H."/>
            <person name="Danchin A."/>
        </authorList>
    </citation>
    <scope>NUCLEOTIDE SEQUENCE [LARGE SCALE GENOMIC DNA]</scope>
    <source>
        <strain>168</strain>
    </source>
</reference>
<reference key="3">
    <citation type="journal article" date="2009" name="Microbiology">
        <title>From a consortium sequence to a unified sequence: the Bacillus subtilis 168 reference genome a decade later.</title>
        <authorList>
            <person name="Barbe V."/>
            <person name="Cruveiller S."/>
            <person name="Kunst F."/>
            <person name="Lenoble P."/>
            <person name="Meurice G."/>
            <person name="Sekowska A."/>
            <person name="Vallenet D."/>
            <person name="Wang T."/>
            <person name="Moszer I."/>
            <person name="Medigue C."/>
            <person name="Danchin A."/>
        </authorList>
    </citation>
    <scope>SEQUENCE REVISION TO 267</scope>
</reference>
<evidence type="ECO:0000255" key="1"/>
<evidence type="ECO:0000256" key="2">
    <source>
        <dbReference type="SAM" id="MobiDB-lite"/>
    </source>
</evidence>
<evidence type="ECO:0000305" key="3"/>
<accession>P54487</accession>
<protein>
    <recommendedName>
        <fullName>Uncharacterized protein YqgE</fullName>
    </recommendedName>
</protein>
<feature type="chain" id="PRO_0000049807" description="Uncharacterized protein YqgE">
    <location>
        <begin position="1"/>
        <end position="430"/>
    </location>
</feature>
<feature type="transmembrane region" description="Helical" evidence="1">
    <location>
        <begin position="18"/>
        <end position="38"/>
    </location>
</feature>
<feature type="transmembrane region" description="Helical" evidence="1">
    <location>
        <begin position="49"/>
        <end position="69"/>
    </location>
</feature>
<feature type="transmembrane region" description="Helical" evidence="1">
    <location>
        <begin position="80"/>
        <end position="100"/>
    </location>
</feature>
<feature type="transmembrane region" description="Helical" evidence="1">
    <location>
        <begin position="109"/>
        <end position="129"/>
    </location>
</feature>
<feature type="transmembrane region" description="Helical" evidence="1">
    <location>
        <begin position="145"/>
        <end position="165"/>
    </location>
</feature>
<feature type="transmembrane region" description="Helical" evidence="1">
    <location>
        <begin position="175"/>
        <end position="195"/>
    </location>
</feature>
<feature type="transmembrane region" description="Helical" evidence="1">
    <location>
        <begin position="235"/>
        <end position="255"/>
    </location>
</feature>
<feature type="transmembrane region" description="Helical" evidence="1">
    <location>
        <begin position="256"/>
        <end position="276"/>
    </location>
</feature>
<feature type="transmembrane region" description="Helical" evidence="1">
    <location>
        <begin position="285"/>
        <end position="305"/>
    </location>
</feature>
<feature type="transmembrane region" description="Helical" evidence="1">
    <location>
        <begin position="307"/>
        <end position="327"/>
    </location>
</feature>
<feature type="transmembrane region" description="Helical" evidence="1">
    <location>
        <begin position="353"/>
        <end position="373"/>
    </location>
</feature>
<feature type="transmembrane region" description="Helical" evidence="1">
    <location>
        <begin position="377"/>
        <end position="397"/>
    </location>
</feature>
<feature type="region of interest" description="Disordered" evidence="2">
    <location>
        <begin position="407"/>
        <end position="430"/>
    </location>
</feature>
<feature type="compositionally biased region" description="Basic and acidic residues" evidence="2">
    <location>
        <begin position="415"/>
        <end position="430"/>
    </location>
</feature>
<feature type="sequence conflict" description="In Ref. 1; BAA12508." evidence="3" ref="1">
    <original>F</original>
    <variation>L</variation>
    <location>
        <position position="267"/>
    </location>
</feature>
<name>YQGE_BACSU</name>
<sequence length="430" mass="48260">MSKLKKVIGDVDVNKGLLFLLTIGGLYSLGIALSNTFVNVYLWKQSGKFIDLAIYNLSIVTMQPITFYLAGRLAKKIDRVFILRFGVIFLAAFYLSVLLAGETAASRLVLIGAVLGVGYGFYWLAFNVLTFEITEPDTRDFFNGFMGILSSSAGMIGPIVAGFVISRLENNTGYTVIFSLSLSLFALAVVMSFFLKRRESKGRFMLSKVFGERHSNMNWRRITNAHFFQGLREGIFVFLISVFVFIETNSELALGTFGLVNSAVSFFAYYFASRLIKKKARKKSILLGGLILYGALFLILFHMSFSTLLTYGVFIAIGYPLLLVPYVSLTYDVIGRARHARKARIEYIVLREMFLNAGRIVSILCFLLIVALLKEDVGIPLSLAILGIGHPLIYYFVKDIRFKEKEGENETMEEDGQKRVTEPTLLKGER</sequence>
<keyword id="KW-1003">Cell membrane</keyword>
<keyword id="KW-0472">Membrane</keyword>
<keyword id="KW-1185">Reference proteome</keyword>
<keyword id="KW-0812">Transmembrane</keyword>
<keyword id="KW-1133">Transmembrane helix</keyword>
<organism>
    <name type="scientific">Bacillus subtilis (strain 168)</name>
    <dbReference type="NCBI Taxonomy" id="224308"/>
    <lineage>
        <taxon>Bacteria</taxon>
        <taxon>Bacillati</taxon>
        <taxon>Bacillota</taxon>
        <taxon>Bacilli</taxon>
        <taxon>Bacillales</taxon>
        <taxon>Bacillaceae</taxon>
        <taxon>Bacillus</taxon>
    </lineage>
</organism>
<gene>
    <name type="primary">yqgE</name>
    <name type="ordered locus">BSU25010</name>
</gene>
<proteinExistence type="predicted"/>